<comment type="subcellular location">
    <subcellularLocation>
        <location evidence="1">Cell membrane</location>
        <topology evidence="1">Multi-pass membrane protein</topology>
    </subcellularLocation>
</comment>
<comment type="similarity">
    <text evidence="1">Belongs to the UPF0060 family.</text>
</comment>
<reference key="1">
    <citation type="journal article" date="2008" name="PLoS ONE">
        <title>Survival in nuclear waste, extreme resistance, and potential applications gleaned from the genome sequence of Kineococcus radiotolerans SRS30216.</title>
        <authorList>
            <person name="Bagwell C.E."/>
            <person name="Bhat S."/>
            <person name="Hawkins G.M."/>
            <person name="Smith B.W."/>
            <person name="Biswas T."/>
            <person name="Hoover T.R."/>
            <person name="Saunders E."/>
            <person name="Han C.S."/>
            <person name="Tsodikov O.V."/>
            <person name="Shimkets L.J."/>
        </authorList>
    </citation>
    <scope>NUCLEOTIDE SEQUENCE [LARGE SCALE GENOMIC DNA]</scope>
    <source>
        <strain>ATCC BAA-149 / DSM 14245 / SRS30216</strain>
    </source>
</reference>
<proteinExistence type="inferred from homology"/>
<accession>A6WCN9</accession>
<evidence type="ECO:0000255" key="1">
    <source>
        <dbReference type="HAMAP-Rule" id="MF_00010"/>
    </source>
</evidence>
<keyword id="KW-1003">Cell membrane</keyword>
<keyword id="KW-0472">Membrane</keyword>
<keyword id="KW-1185">Reference proteome</keyword>
<keyword id="KW-0812">Transmembrane</keyword>
<keyword id="KW-1133">Transmembrane helix</keyword>
<feature type="chain" id="PRO_0000336105" description="UPF0060 membrane protein Krad_3114">
    <location>
        <begin position="1"/>
        <end position="111"/>
    </location>
</feature>
<feature type="transmembrane region" description="Helical" evidence="1">
    <location>
        <begin position="7"/>
        <end position="27"/>
    </location>
</feature>
<feature type="transmembrane region" description="Helical" evidence="1">
    <location>
        <begin position="33"/>
        <end position="53"/>
    </location>
</feature>
<feature type="transmembrane region" description="Helical" evidence="1">
    <location>
        <begin position="62"/>
        <end position="82"/>
    </location>
</feature>
<feature type="transmembrane region" description="Helical" evidence="1">
    <location>
        <begin position="88"/>
        <end position="108"/>
    </location>
</feature>
<sequence>MDVLRSIALFVLAALLEIGGAWLVWQGVREHRGLAWIGAGVIALGLYGFAATLQPEAQFGRVLAAYGGVFVAGSLLWAAVVDGYRPDRFDVAGALVCLVGVGIVMYAPRPS</sequence>
<protein>
    <recommendedName>
        <fullName evidence="1">UPF0060 membrane protein Krad_3114</fullName>
    </recommendedName>
</protein>
<organism>
    <name type="scientific">Kineococcus radiotolerans (strain ATCC BAA-149 / DSM 14245 / SRS30216)</name>
    <dbReference type="NCBI Taxonomy" id="266940"/>
    <lineage>
        <taxon>Bacteria</taxon>
        <taxon>Bacillati</taxon>
        <taxon>Actinomycetota</taxon>
        <taxon>Actinomycetes</taxon>
        <taxon>Kineosporiales</taxon>
        <taxon>Kineosporiaceae</taxon>
        <taxon>Kineococcus</taxon>
    </lineage>
</organism>
<dbReference type="EMBL" id="CP000750">
    <property type="protein sequence ID" value="ABS04578.1"/>
    <property type="molecule type" value="Genomic_DNA"/>
</dbReference>
<dbReference type="RefSeq" id="WP_012087171.1">
    <property type="nucleotide sequence ID" value="NC_009664.2"/>
</dbReference>
<dbReference type="SMR" id="A6WCN9"/>
<dbReference type="STRING" id="266940.Krad_3114"/>
<dbReference type="KEGG" id="kra:Krad_3114"/>
<dbReference type="eggNOG" id="COG1742">
    <property type="taxonomic scope" value="Bacteria"/>
</dbReference>
<dbReference type="HOGENOM" id="CLU_117653_0_1_11"/>
<dbReference type="OrthoDB" id="123240at2"/>
<dbReference type="Proteomes" id="UP000001116">
    <property type="component" value="Chromosome"/>
</dbReference>
<dbReference type="GO" id="GO:0005886">
    <property type="term" value="C:plasma membrane"/>
    <property type="evidence" value="ECO:0007669"/>
    <property type="project" value="UniProtKB-SubCell"/>
</dbReference>
<dbReference type="HAMAP" id="MF_00010">
    <property type="entry name" value="UPF0060"/>
    <property type="match status" value="1"/>
</dbReference>
<dbReference type="InterPro" id="IPR003844">
    <property type="entry name" value="UPF0060"/>
</dbReference>
<dbReference type="NCBIfam" id="NF002586">
    <property type="entry name" value="PRK02237.1"/>
    <property type="match status" value="1"/>
</dbReference>
<dbReference type="PANTHER" id="PTHR36116">
    <property type="entry name" value="UPF0060 MEMBRANE PROTEIN YNFA"/>
    <property type="match status" value="1"/>
</dbReference>
<dbReference type="PANTHER" id="PTHR36116:SF1">
    <property type="entry name" value="UPF0060 MEMBRANE PROTEIN YNFA"/>
    <property type="match status" value="1"/>
</dbReference>
<dbReference type="Pfam" id="PF02694">
    <property type="entry name" value="UPF0060"/>
    <property type="match status" value="1"/>
</dbReference>
<dbReference type="SUPFAM" id="SSF103481">
    <property type="entry name" value="Multidrug resistance efflux transporter EmrE"/>
    <property type="match status" value="1"/>
</dbReference>
<name>Y3114_KINRD</name>
<gene>
    <name type="ordered locus">Krad_3114</name>
</gene>